<reference key="1">
    <citation type="journal article" date="1998" name="Nature">
        <title>Deciphering the biology of Mycobacterium tuberculosis from the complete genome sequence.</title>
        <authorList>
            <person name="Cole S.T."/>
            <person name="Brosch R."/>
            <person name="Parkhill J."/>
            <person name="Garnier T."/>
            <person name="Churcher C.M."/>
            <person name="Harris D.E."/>
            <person name="Gordon S.V."/>
            <person name="Eiglmeier K."/>
            <person name="Gas S."/>
            <person name="Barry C.E. III"/>
            <person name="Tekaia F."/>
            <person name="Badcock K."/>
            <person name="Basham D."/>
            <person name="Brown D."/>
            <person name="Chillingworth T."/>
            <person name="Connor R."/>
            <person name="Davies R.M."/>
            <person name="Devlin K."/>
            <person name="Feltwell T."/>
            <person name="Gentles S."/>
            <person name="Hamlin N."/>
            <person name="Holroyd S."/>
            <person name="Hornsby T."/>
            <person name="Jagels K."/>
            <person name="Krogh A."/>
            <person name="McLean J."/>
            <person name="Moule S."/>
            <person name="Murphy L.D."/>
            <person name="Oliver S."/>
            <person name="Osborne J."/>
            <person name="Quail M.A."/>
            <person name="Rajandream M.A."/>
            <person name="Rogers J."/>
            <person name="Rutter S."/>
            <person name="Seeger K."/>
            <person name="Skelton S."/>
            <person name="Squares S."/>
            <person name="Squares R."/>
            <person name="Sulston J.E."/>
            <person name="Taylor K."/>
            <person name="Whitehead S."/>
            <person name="Barrell B.G."/>
        </authorList>
    </citation>
    <scope>NUCLEOTIDE SEQUENCE [LARGE SCALE GENOMIC DNA]</scope>
    <source>
        <strain>ATCC 25618 / H37Rv</strain>
    </source>
</reference>
<reference key="2">
    <citation type="journal article" date="2011" name="Mol. Cell. Proteomics">
        <title>Proteogenomic analysis of Mycobacterium tuberculosis by high resolution mass spectrometry.</title>
        <authorList>
            <person name="Kelkar D.S."/>
            <person name="Kumar D."/>
            <person name="Kumar P."/>
            <person name="Balakrishnan L."/>
            <person name="Muthusamy B."/>
            <person name="Yadav A.K."/>
            <person name="Shrivastava P."/>
            <person name="Marimuthu A."/>
            <person name="Anand S."/>
            <person name="Sundaram H."/>
            <person name="Kingsbury R."/>
            <person name="Harsha H.C."/>
            <person name="Nair B."/>
            <person name="Prasad T.S."/>
            <person name="Chauhan D.S."/>
            <person name="Katoch K."/>
            <person name="Katoch V.M."/>
            <person name="Kumar P."/>
            <person name="Chaerkady R."/>
            <person name="Ramachandran S."/>
            <person name="Dash D."/>
            <person name="Pandey A."/>
        </authorList>
    </citation>
    <scope>ACETYLATION [LARGE SCALE ANALYSIS] AT THR-2</scope>
    <scope>CLEAVAGE OF INITIATOR METHIONINE [LARGE SCALE ANALYSIS]</scope>
    <scope>IDENTIFICATION BY MASS SPECTROMETRY [LARGE SCALE ANALYSIS]</scope>
    <source>
        <strain>ATCC 25618 / H37Rv</strain>
    </source>
</reference>
<dbReference type="EC" id="7.1.1.-" evidence="1"/>
<dbReference type="EMBL" id="AL123456">
    <property type="protein sequence ID" value="CCP45959.1"/>
    <property type="molecule type" value="Genomic_DNA"/>
</dbReference>
<dbReference type="PIR" id="E70647">
    <property type="entry name" value="E70647"/>
</dbReference>
<dbReference type="RefSeq" id="NP_217664.1">
    <property type="nucleotide sequence ID" value="NC_000962.3"/>
</dbReference>
<dbReference type="RefSeq" id="WP_003416430.1">
    <property type="nucleotide sequence ID" value="NZ_NVQJ01000019.1"/>
</dbReference>
<dbReference type="SMR" id="P9WJH5"/>
<dbReference type="FunCoup" id="P9WJH5">
    <property type="interactions" value="307"/>
</dbReference>
<dbReference type="STRING" id="83332.Rv3148"/>
<dbReference type="iPTMnet" id="P9WJH5"/>
<dbReference type="PaxDb" id="83332-Rv3148"/>
<dbReference type="DNASU" id="888851"/>
<dbReference type="GeneID" id="45427135"/>
<dbReference type="GeneID" id="888851"/>
<dbReference type="KEGG" id="mtu:Rv3148"/>
<dbReference type="KEGG" id="mtv:RVBD_3148"/>
<dbReference type="TubercuList" id="Rv3148"/>
<dbReference type="eggNOG" id="COG0649">
    <property type="taxonomic scope" value="Bacteria"/>
</dbReference>
<dbReference type="InParanoid" id="P9WJH5"/>
<dbReference type="OrthoDB" id="9801496at2"/>
<dbReference type="PhylomeDB" id="P9WJH5"/>
<dbReference type="Proteomes" id="UP000001584">
    <property type="component" value="Chromosome"/>
</dbReference>
<dbReference type="GO" id="GO:0005886">
    <property type="term" value="C:plasma membrane"/>
    <property type="evidence" value="ECO:0007005"/>
    <property type="project" value="MTBBASE"/>
</dbReference>
<dbReference type="GO" id="GO:0051287">
    <property type="term" value="F:NAD binding"/>
    <property type="evidence" value="ECO:0007669"/>
    <property type="project" value="InterPro"/>
</dbReference>
<dbReference type="GO" id="GO:0050136">
    <property type="term" value="F:NADH:ubiquinone reductase (non-electrogenic) activity"/>
    <property type="evidence" value="ECO:0007669"/>
    <property type="project" value="UniProtKB-UniRule"/>
</dbReference>
<dbReference type="GO" id="GO:0048038">
    <property type="term" value="F:quinone binding"/>
    <property type="evidence" value="ECO:0007669"/>
    <property type="project" value="UniProtKB-KW"/>
</dbReference>
<dbReference type="FunFam" id="1.10.645.10:FF:000005">
    <property type="entry name" value="NADH-quinone oxidoreductase subunit D"/>
    <property type="match status" value="1"/>
</dbReference>
<dbReference type="Gene3D" id="1.10.645.10">
    <property type="entry name" value="Cytochrome-c3 Hydrogenase, chain B"/>
    <property type="match status" value="1"/>
</dbReference>
<dbReference type="HAMAP" id="MF_01358">
    <property type="entry name" value="NDH1_NuoD"/>
    <property type="match status" value="1"/>
</dbReference>
<dbReference type="InterPro" id="IPR001135">
    <property type="entry name" value="NADH_Q_OxRdtase_suD"/>
</dbReference>
<dbReference type="InterPro" id="IPR014029">
    <property type="entry name" value="NADH_UbQ_OxRdtase_49kDa_CS"/>
</dbReference>
<dbReference type="InterPro" id="IPR022885">
    <property type="entry name" value="NDH1_su_D/H"/>
</dbReference>
<dbReference type="InterPro" id="IPR029014">
    <property type="entry name" value="NiFe-Hase_large"/>
</dbReference>
<dbReference type="NCBIfam" id="TIGR01962">
    <property type="entry name" value="NuoD"/>
    <property type="match status" value="1"/>
</dbReference>
<dbReference type="NCBIfam" id="NF004739">
    <property type="entry name" value="PRK06075.1"/>
    <property type="match status" value="1"/>
</dbReference>
<dbReference type="PANTHER" id="PTHR11993:SF10">
    <property type="entry name" value="NADH DEHYDROGENASE [UBIQUINONE] IRON-SULFUR PROTEIN 2, MITOCHONDRIAL"/>
    <property type="match status" value="1"/>
</dbReference>
<dbReference type="PANTHER" id="PTHR11993">
    <property type="entry name" value="NADH-UBIQUINONE OXIDOREDUCTASE 49 KDA SUBUNIT"/>
    <property type="match status" value="1"/>
</dbReference>
<dbReference type="Pfam" id="PF00346">
    <property type="entry name" value="Complex1_49kDa"/>
    <property type="match status" value="1"/>
</dbReference>
<dbReference type="SUPFAM" id="SSF56762">
    <property type="entry name" value="HydB/Nqo4-like"/>
    <property type="match status" value="1"/>
</dbReference>
<dbReference type="PROSITE" id="PS00535">
    <property type="entry name" value="COMPLEX1_49K"/>
    <property type="match status" value="1"/>
</dbReference>
<comment type="function">
    <text evidence="1">NDH-1 shuttles electrons from NADH, via FMN and iron-sulfur (Fe-S) centers, to quinones in the respiratory chain. The immediate electron acceptor for the enzyme in this species is believed to be a menaquinone. Couples the redox reaction to proton translocation (for every two electrons transferred, four hydrogen ions are translocated across the cytoplasmic membrane), and thus conserves the redox energy in a proton gradient.</text>
</comment>
<comment type="catalytic activity">
    <reaction evidence="1">
        <text>a quinone + NADH + 5 H(+)(in) = a quinol + NAD(+) + 4 H(+)(out)</text>
        <dbReference type="Rhea" id="RHEA:57888"/>
        <dbReference type="ChEBI" id="CHEBI:15378"/>
        <dbReference type="ChEBI" id="CHEBI:24646"/>
        <dbReference type="ChEBI" id="CHEBI:57540"/>
        <dbReference type="ChEBI" id="CHEBI:57945"/>
        <dbReference type="ChEBI" id="CHEBI:132124"/>
    </reaction>
</comment>
<comment type="subunit">
    <text evidence="1">NDH-1 is composed of 14 different subunits. Subunits NuoB, C, D, E, F, and G constitute the peripheral sector of the complex.</text>
</comment>
<comment type="subcellular location">
    <subcellularLocation>
        <location evidence="1">Cell membrane</location>
        <topology evidence="1">Peripheral membrane protein</topology>
        <orientation evidence="1">Cytoplasmic side</orientation>
    </subcellularLocation>
</comment>
<comment type="similarity">
    <text evidence="1">Belongs to the complex I 49 kDa subunit family.</text>
</comment>
<protein>
    <recommendedName>
        <fullName evidence="1">NADH-quinone oxidoreductase subunit D</fullName>
        <ecNumber evidence="1">7.1.1.-</ecNumber>
    </recommendedName>
    <alternativeName>
        <fullName evidence="1">NADH dehydrogenase I subunit D</fullName>
    </alternativeName>
    <alternativeName>
        <fullName evidence="1">NDH-1 subunit D</fullName>
    </alternativeName>
</protein>
<keyword id="KW-0007">Acetylation</keyword>
<keyword id="KW-1003">Cell membrane</keyword>
<keyword id="KW-0472">Membrane</keyword>
<keyword id="KW-0520">NAD</keyword>
<keyword id="KW-0874">Quinone</keyword>
<keyword id="KW-1185">Reference proteome</keyword>
<keyword id="KW-1278">Translocase</keyword>
<keyword id="KW-0813">Transport</keyword>
<gene>
    <name evidence="1" type="primary">nuoD</name>
    <name type="ordered locus">Rv3148</name>
    <name type="ORF">MTCY03A2.10c</name>
</gene>
<accession>P9WJH5</accession>
<accession>L0TEP2</accession>
<accession>P65569</accession>
<accession>P95178</accession>
<feature type="initiator methionine" description="Removed" evidence="2">
    <location>
        <position position="1"/>
    </location>
</feature>
<feature type="chain" id="PRO_0000118620" description="NADH-quinone oxidoreductase subunit D">
    <location>
        <begin position="2"/>
        <end position="440"/>
    </location>
</feature>
<feature type="modified residue" description="N-acetylthreonine" evidence="2">
    <location>
        <position position="2"/>
    </location>
</feature>
<organism>
    <name type="scientific">Mycobacterium tuberculosis (strain ATCC 25618 / H37Rv)</name>
    <dbReference type="NCBI Taxonomy" id="83332"/>
    <lineage>
        <taxon>Bacteria</taxon>
        <taxon>Bacillati</taxon>
        <taxon>Actinomycetota</taxon>
        <taxon>Actinomycetes</taxon>
        <taxon>Mycobacteriales</taxon>
        <taxon>Mycobacteriaceae</taxon>
        <taxon>Mycobacterium</taxon>
        <taxon>Mycobacterium tuberculosis complex</taxon>
    </lineage>
</organism>
<evidence type="ECO:0000255" key="1">
    <source>
        <dbReference type="HAMAP-Rule" id="MF_01358"/>
    </source>
</evidence>
<evidence type="ECO:0007744" key="2">
    <source>
    </source>
</evidence>
<sequence length="440" mass="48164">MTAIADSAGGAGETVLVAGGQDWQQVVDAARSADPGERIVVNMGPQHPSTHGVLRLILEIEGETVVEARCGIGYLHTGIEKNLEYRYWTQGVTFVTRMDYLSPFFNETAYCLGVEKLLGITDEIPERVNVIRVLMMELNRISSHLVALATGGMELGAMTPMFVGFRAREIVLTLFEKITGLRMNSAYIRPGGVAQDLPPNAATEIAEALKQLRQPLREMGELLNENAIWKARTQGVGYLDLTGCMALGITGPILRSTGLPHDLRKSEPYCGYQHYEFDVITDDSCDAYGRYMIRVKEMWESMKIVEQCLDKLRPGPTMISDRKLAWPADLQVGPDGLGNSPKHIAKIMGSSMEALIHHFKLVTEGIRVPAGQVYVAVESPRGELGVHMVSDGGTRPYRVHYRDPSFTNLQSVAAMCEGGMVADLIAAVASIDPVMGGVDR</sequence>
<proteinExistence type="evidence at protein level"/>
<name>NUOD_MYCTU</name>